<protein>
    <recommendedName>
        <fullName evidence="11">Claudin-18</fullName>
    </recommendedName>
</protein>
<name>CLD18_RAT</name>
<reference evidence="10" key="1">
    <citation type="journal article" date="2004" name="Nature">
        <title>Genome sequence of the Brown Norway rat yields insights into mammalian evolution.</title>
        <authorList>
            <person name="Gibbs R.A."/>
            <person name="Weinstock G.M."/>
            <person name="Metzker M.L."/>
            <person name="Muzny D.M."/>
            <person name="Sodergren E.J."/>
            <person name="Scherer S."/>
            <person name="Scott G."/>
            <person name="Steffen D."/>
            <person name="Worley K.C."/>
            <person name="Burch P.E."/>
            <person name="Okwuonu G."/>
            <person name="Hines S."/>
            <person name="Lewis L."/>
            <person name="Deramo C."/>
            <person name="Delgado O."/>
            <person name="Dugan-Rocha S."/>
            <person name="Miner G."/>
            <person name="Morgan M."/>
            <person name="Hawes A."/>
            <person name="Gill R."/>
            <person name="Holt R.A."/>
            <person name="Adams M.D."/>
            <person name="Amanatides P.G."/>
            <person name="Baden-Tillson H."/>
            <person name="Barnstead M."/>
            <person name="Chin S."/>
            <person name="Evans C.A."/>
            <person name="Ferriera S."/>
            <person name="Fosler C."/>
            <person name="Glodek A."/>
            <person name="Gu Z."/>
            <person name="Jennings D."/>
            <person name="Kraft C.L."/>
            <person name="Nguyen T."/>
            <person name="Pfannkoch C.M."/>
            <person name="Sitter C."/>
            <person name="Sutton G.G."/>
            <person name="Venter J.C."/>
            <person name="Woodage T."/>
            <person name="Smith D."/>
            <person name="Lee H.-M."/>
            <person name="Gustafson E."/>
            <person name="Cahill P."/>
            <person name="Kana A."/>
            <person name="Doucette-Stamm L."/>
            <person name="Weinstock K."/>
            <person name="Fechtel K."/>
            <person name="Weiss R.B."/>
            <person name="Dunn D.M."/>
            <person name="Green E.D."/>
            <person name="Blakesley R.W."/>
            <person name="Bouffard G.G."/>
            <person name="De Jong P.J."/>
            <person name="Osoegawa K."/>
            <person name="Zhu B."/>
            <person name="Marra M."/>
            <person name="Schein J."/>
            <person name="Bosdet I."/>
            <person name="Fjell C."/>
            <person name="Jones S."/>
            <person name="Krzywinski M."/>
            <person name="Mathewson C."/>
            <person name="Siddiqui A."/>
            <person name="Wye N."/>
            <person name="McPherson J."/>
            <person name="Zhao S."/>
            <person name="Fraser C.M."/>
            <person name="Shetty J."/>
            <person name="Shatsman S."/>
            <person name="Geer K."/>
            <person name="Chen Y."/>
            <person name="Abramzon S."/>
            <person name="Nierman W.C."/>
            <person name="Havlak P.H."/>
            <person name="Chen R."/>
            <person name="Durbin K.J."/>
            <person name="Egan A."/>
            <person name="Ren Y."/>
            <person name="Song X.-Z."/>
            <person name="Li B."/>
            <person name="Liu Y."/>
            <person name="Qin X."/>
            <person name="Cawley S."/>
            <person name="Cooney A.J."/>
            <person name="D'Souza L.M."/>
            <person name="Martin K."/>
            <person name="Wu J.Q."/>
            <person name="Gonzalez-Garay M.L."/>
            <person name="Jackson A.R."/>
            <person name="Kalafus K.J."/>
            <person name="McLeod M.P."/>
            <person name="Milosavljevic A."/>
            <person name="Virk D."/>
            <person name="Volkov A."/>
            <person name="Wheeler D.A."/>
            <person name="Zhang Z."/>
            <person name="Bailey J.A."/>
            <person name="Eichler E.E."/>
            <person name="Tuzun E."/>
            <person name="Birney E."/>
            <person name="Mongin E."/>
            <person name="Ureta-Vidal A."/>
            <person name="Woodwark C."/>
            <person name="Zdobnov E."/>
            <person name="Bork P."/>
            <person name="Suyama M."/>
            <person name="Torrents D."/>
            <person name="Alexandersson M."/>
            <person name="Trask B.J."/>
            <person name="Young J.M."/>
            <person name="Huang H."/>
            <person name="Wang H."/>
            <person name="Xing H."/>
            <person name="Daniels S."/>
            <person name="Gietzen D."/>
            <person name="Schmidt J."/>
            <person name="Stevens K."/>
            <person name="Vitt U."/>
            <person name="Wingrove J."/>
            <person name="Camara F."/>
            <person name="Mar Alba M."/>
            <person name="Abril J.F."/>
            <person name="Guigo R."/>
            <person name="Smit A."/>
            <person name="Dubchak I."/>
            <person name="Rubin E.M."/>
            <person name="Couronne O."/>
            <person name="Poliakov A."/>
            <person name="Huebner N."/>
            <person name="Ganten D."/>
            <person name="Goesele C."/>
            <person name="Hummel O."/>
            <person name="Kreitler T."/>
            <person name="Lee Y.-A."/>
            <person name="Monti J."/>
            <person name="Schulz H."/>
            <person name="Zimdahl H."/>
            <person name="Himmelbauer H."/>
            <person name="Lehrach H."/>
            <person name="Jacob H.J."/>
            <person name="Bromberg S."/>
            <person name="Gullings-Handley J."/>
            <person name="Jensen-Seaman M.I."/>
            <person name="Kwitek A.E."/>
            <person name="Lazar J."/>
            <person name="Pasko D."/>
            <person name="Tonellato P.J."/>
            <person name="Twigger S."/>
            <person name="Ponting C.P."/>
            <person name="Duarte J.M."/>
            <person name="Rice S."/>
            <person name="Goodstadt L."/>
            <person name="Beatson S.A."/>
            <person name="Emes R.D."/>
            <person name="Winter E.E."/>
            <person name="Webber C."/>
            <person name="Brandt P."/>
            <person name="Nyakatura G."/>
            <person name="Adetobi M."/>
            <person name="Chiaromonte F."/>
            <person name="Elnitski L."/>
            <person name="Eswara P."/>
            <person name="Hardison R.C."/>
            <person name="Hou M."/>
            <person name="Kolbe D."/>
            <person name="Makova K."/>
            <person name="Miller W."/>
            <person name="Nekrutenko A."/>
            <person name="Riemer C."/>
            <person name="Schwartz S."/>
            <person name="Taylor J."/>
            <person name="Yang S."/>
            <person name="Zhang Y."/>
            <person name="Lindpaintner K."/>
            <person name="Andrews T.D."/>
            <person name="Caccamo M."/>
            <person name="Clamp M."/>
            <person name="Clarke L."/>
            <person name="Curwen V."/>
            <person name="Durbin R.M."/>
            <person name="Eyras E."/>
            <person name="Searle S.M."/>
            <person name="Cooper G.M."/>
            <person name="Batzoglou S."/>
            <person name="Brudno M."/>
            <person name="Sidow A."/>
            <person name="Stone E.A."/>
            <person name="Payseur B.A."/>
            <person name="Bourque G."/>
            <person name="Lopez-Otin C."/>
            <person name="Puente X.S."/>
            <person name="Chakrabarti K."/>
            <person name="Chatterji S."/>
            <person name="Dewey C."/>
            <person name="Pachter L."/>
            <person name="Bray N."/>
            <person name="Yap V.B."/>
            <person name="Caspi A."/>
            <person name="Tesler G."/>
            <person name="Pevzner P.A."/>
            <person name="Haussler D."/>
            <person name="Roskin K.M."/>
            <person name="Baertsch R."/>
            <person name="Clawson H."/>
            <person name="Furey T.S."/>
            <person name="Hinrichs A.S."/>
            <person name="Karolchik D."/>
            <person name="Kent W.J."/>
            <person name="Rosenbloom K.R."/>
            <person name="Trumbower H."/>
            <person name="Weirauch M."/>
            <person name="Cooper D.N."/>
            <person name="Stenson P.D."/>
            <person name="Ma B."/>
            <person name="Brent M."/>
            <person name="Arumugam M."/>
            <person name="Shteynberg D."/>
            <person name="Copley R.R."/>
            <person name="Taylor M.S."/>
            <person name="Riethman H."/>
            <person name="Mudunuri U."/>
            <person name="Peterson J."/>
            <person name="Guyer M."/>
            <person name="Felsenfeld A."/>
            <person name="Old S."/>
            <person name="Mockrin S."/>
            <person name="Collins F.S."/>
        </authorList>
    </citation>
    <scope>NUCLEOTIDE SEQUENCE [LARGE SCALE GENOMIC DNA]</scope>
    <source>
        <strain evidence="10">Brown Norway</strain>
    </source>
</reference>
<reference key="2">
    <citation type="submission" date="2005-09" db="EMBL/GenBank/DDBJ databases">
        <authorList>
            <person name="Mural R.J."/>
            <person name="Adams M.D."/>
            <person name="Myers E.W."/>
            <person name="Smith H.O."/>
            <person name="Venter J.C."/>
        </authorList>
    </citation>
    <scope>NUCLEOTIDE SEQUENCE [LARGE SCALE GENOMIC DNA]</scope>
</reference>
<reference evidence="9" key="3">
    <citation type="journal article" date="2004" name="Genome Res.">
        <title>The status, quality, and expansion of the NIH full-length cDNA project: the Mammalian Gene Collection (MGC).</title>
        <authorList>
            <consortium name="The MGC Project Team"/>
        </authorList>
    </citation>
    <scope>NUCLEOTIDE SEQUENCE [LARGE SCALE MRNA] (ISOFORM A1.1)</scope>
    <source>
        <tissue evidence="9">Lung</tissue>
    </source>
</reference>
<reference evidence="12" key="4">
    <citation type="journal article" date="2012" name="Nat. Commun.">
        <title>Quantitative maps of protein phosphorylation sites across 14 different rat organs and tissues.</title>
        <authorList>
            <person name="Lundby A."/>
            <person name="Secher A."/>
            <person name="Lage K."/>
            <person name="Nordsborg N.B."/>
            <person name="Dmytriyev A."/>
            <person name="Lundby C."/>
            <person name="Olsen J.V."/>
        </authorList>
    </citation>
    <scope>IDENTIFICATION BY MASS SPECTROMETRY [LARGE SCALE ANALYSIS]</scope>
</reference>
<reference evidence="7" key="5">
    <citation type="journal article" date="2014" name="Am. J. Respir. Cell Mol. Biol.">
        <title>Claudin-18 deficiency results in alveolar barrier dysfunction and impaired alveologenesis in mice.</title>
        <authorList>
            <person name="LaFemina M.J."/>
            <person name="Sutherland K.M."/>
            <person name="Bentley T."/>
            <person name="Gonzales L.W."/>
            <person name="Allen L."/>
            <person name="Chapin C.J."/>
            <person name="Rokkam D."/>
            <person name="Sweerus K.A."/>
            <person name="Dobbs L.G."/>
            <person name="Ballard P.L."/>
            <person name="Frank J.A."/>
        </authorList>
    </citation>
    <scope>FUNCTION</scope>
    <scope>TISSUE SPECIFICITY</scope>
</reference>
<feature type="chain" id="PRO_0000144780" description="Claudin-18" evidence="3">
    <location>
        <begin position="1"/>
        <end position="261"/>
    </location>
</feature>
<feature type="topological domain" description="Cytoplasmic" evidence="3">
    <location>
        <begin position="1"/>
        <end position="6"/>
    </location>
</feature>
<feature type="transmembrane region" description="Helical" evidence="3">
    <location>
        <begin position="7"/>
        <end position="27"/>
    </location>
</feature>
<feature type="topological domain" description="Extracellular" evidence="3">
    <location>
        <begin position="28"/>
        <end position="80"/>
    </location>
</feature>
<feature type="transmembrane region" description="Helical" evidence="3">
    <location>
        <begin position="81"/>
        <end position="101"/>
    </location>
</feature>
<feature type="topological domain" description="Cytoplasmic" evidence="3">
    <location>
        <begin position="102"/>
        <end position="122"/>
    </location>
</feature>
<feature type="transmembrane region" description="Helical" evidence="3">
    <location>
        <begin position="123"/>
        <end position="143"/>
    </location>
</feature>
<feature type="topological domain" description="Extracellular" evidence="3">
    <location>
        <begin position="144"/>
        <end position="173"/>
    </location>
</feature>
<feature type="transmembrane region" description="Helical" evidence="3">
    <location>
        <begin position="174"/>
        <end position="194"/>
    </location>
</feature>
<feature type="topological domain" description="Cytoplasmic" evidence="3">
    <location>
        <begin position="195"/>
        <end position="261"/>
    </location>
</feature>
<feature type="region of interest" description="Required for role in regulation of RANKL-induced osteoclast differentiation" evidence="2">
    <location>
        <begin position="195"/>
        <end position="261"/>
    </location>
</feature>
<feature type="region of interest" description="Disordered" evidence="5">
    <location>
        <begin position="242"/>
        <end position="261"/>
    </location>
</feature>
<feature type="modified residue" description="Phosphoserine" evidence="2">
    <location>
        <position position="214"/>
    </location>
</feature>
<feature type="splice variant" id="VSP_061799" description="In isoform A2.1." evidence="8">
    <original>MATTTCQVVGLLLSLLGLAGCIAATGMDMWSTQDLYDNPVTSVFQYEGLWRSCVQQSSGFTECRPYFTI</original>
    <variation>MSVTACQGLGFVVSLIGFAGIIAATCMDQWSTQDLYNNPVTAVFNYQGLWRSCVRESSGFTECRGYFTL</variation>
    <location>
        <begin position="1"/>
        <end position="69"/>
    </location>
</feature>
<accession>Q5I0E5</accession>
<accession>A0A8I6A5Z5</accession>
<accession>F1LNR6</accession>
<evidence type="ECO:0000250" key="1">
    <source>
        <dbReference type="UniProtKB" id="P56856"/>
    </source>
</evidence>
<evidence type="ECO:0000250" key="2">
    <source>
        <dbReference type="UniProtKB" id="P56857"/>
    </source>
</evidence>
<evidence type="ECO:0000255" key="3"/>
<evidence type="ECO:0000255" key="4">
    <source>
        <dbReference type="RuleBase" id="RU060637"/>
    </source>
</evidence>
<evidence type="ECO:0000256" key="5">
    <source>
        <dbReference type="SAM" id="MobiDB-lite"/>
    </source>
</evidence>
<evidence type="ECO:0000269" key="6">
    <source>
    </source>
</evidence>
<evidence type="ECO:0000305" key="7"/>
<evidence type="ECO:0000305" key="8">
    <source ref="2"/>
</evidence>
<evidence type="ECO:0000312" key="9">
    <source>
        <dbReference type="EMBL" id="AAH88427.1"/>
    </source>
</evidence>
<evidence type="ECO:0000312" key="10">
    <source>
        <dbReference type="Proteomes" id="UP000002494"/>
    </source>
</evidence>
<evidence type="ECO:0000312" key="11">
    <source>
        <dbReference type="RGD" id="1359696"/>
    </source>
</evidence>
<evidence type="ECO:0007744" key="12">
    <source>
    </source>
</evidence>
<keyword id="KW-0025">Alternative splicing</keyword>
<keyword id="KW-0965">Cell junction</keyword>
<keyword id="KW-1003">Cell membrane</keyword>
<keyword id="KW-0472">Membrane</keyword>
<keyword id="KW-0597">Phosphoprotein</keyword>
<keyword id="KW-1185">Reference proteome</keyword>
<keyword id="KW-0796">Tight junction</keyword>
<keyword id="KW-0812">Transmembrane</keyword>
<keyword id="KW-1133">Transmembrane helix</keyword>
<dbReference type="EMBL" id="CH473954">
    <property type="protein sequence ID" value="EDL77432.1"/>
    <property type="molecule type" value="Genomic_DNA"/>
</dbReference>
<dbReference type="EMBL" id="CH473954">
    <property type="protein sequence ID" value="EDL77433.1"/>
    <property type="molecule type" value="Genomic_DNA"/>
</dbReference>
<dbReference type="EMBL" id="BC088427">
    <property type="protein sequence ID" value="AAH88427.1"/>
    <property type="molecule type" value="mRNA"/>
</dbReference>
<dbReference type="RefSeq" id="NP_001014118.1">
    <molecule id="Q5I0E5-1"/>
    <property type="nucleotide sequence ID" value="NM_001014096.1"/>
</dbReference>
<dbReference type="RefSeq" id="XP_006243691.1">
    <property type="nucleotide sequence ID" value="XM_006243629.3"/>
</dbReference>
<dbReference type="SMR" id="Q5I0E5"/>
<dbReference type="FunCoup" id="Q5I0E5">
    <property type="interactions" value="298"/>
</dbReference>
<dbReference type="STRING" id="10116.ENSRNOP00000046247"/>
<dbReference type="iPTMnet" id="Q5I0E5"/>
<dbReference type="PhosphoSitePlus" id="Q5I0E5"/>
<dbReference type="PaxDb" id="10116-ENSRNOP00000046247"/>
<dbReference type="Ensembl" id="ENSRNOT00000052043.5">
    <molecule id="Q5I0E5-1"/>
    <property type="protein sequence ID" value="ENSRNOP00000046247.4"/>
    <property type="gene ID" value="ENSRNOG00000030386.5"/>
</dbReference>
<dbReference type="Ensembl" id="ENSRNOT00000094503.1">
    <molecule id="Q5I0E5-2"/>
    <property type="protein sequence ID" value="ENSRNOP00000087515.1"/>
    <property type="gene ID" value="ENSRNOG00000030386.5"/>
</dbReference>
<dbReference type="GeneID" id="315953"/>
<dbReference type="KEGG" id="rno:315953"/>
<dbReference type="UCSC" id="RGD:1359696">
    <molecule id="Q5I0E5-1"/>
    <property type="organism name" value="rat"/>
</dbReference>
<dbReference type="AGR" id="RGD:1359696"/>
<dbReference type="CTD" id="51208"/>
<dbReference type="RGD" id="1359696">
    <property type="gene designation" value="Cldn18"/>
</dbReference>
<dbReference type="eggNOG" id="ENOG502QTRB">
    <property type="taxonomic scope" value="Eukaryota"/>
</dbReference>
<dbReference type="GeneTree" id="ENSGT00940000158655"/>
<dbReference type="HOGENOM" id="CLU_076370_2_1_1"/>
<dbReference type="InParanoid" id="Q5I0E5"/>
<dbReference type="OMA" id="TICQVMG"/>
<dbReference type="OrthoDB" id="50238at9989"/>
<dbReference type="PRO" id="PR:Q5I0E5"/>
<dbReference type="Proteomes" id="UP000002494">
    <property type="component" value="Chromosome 8"/>
</dbReference>
<dbReference type="Proteomes" id="UP000234681">
    <property type="component" value="Chromosome 8"/>
</dbReference>
<dbReference type="Bgee" id="ENSRNOG00000030386">
    <property type="expression patterns" value="Expressed in lung and 5 other cell types or tissues"/>
</dbReference>
<dbReference type="GO" id="GO:0005923">
    <property type="term" value="C:bicellular tight junction"/>
    <property type="evidence" value="ECO:0000318"/>
    <property type="project" value="GO_Central"/>
</dbReference>
<dbReference type="GO" id="GO:0005911">
    <property type="term" value="C:cell-cell junction"/>
    <property type="evidence" value="ECO:0000266"/>
    <property type="project" value="RGD"/>
</dbReference>
<dbReference type="GO" id="GO:0005886">
    <property type="term" value="C:plasma membrane"/>
    <property type="evidence" value="ECO:0000266"/>
    <property type="project" value="RGD"/>
</dbReference>
<dbReference type="GO" id="GO:0070160">
    <property type="term" value="C:tight junction"/>
    <property type="evidence" value="ECO:0000266"/>
    <property type="project" value="RGD"/>
</dbReference>
<dbReference type="GO" id="GO:0005198">
    <property type="term" value="F:structural molecule activity"/>
    <property type="evidence" value="ECO:0007669"/>
    <property type="project" value="InterPro"/>
</dbReference>
<dbReference type="GO" id="GO:0070830">
    <property type="term" value="P:bicellular tight junction assembly"/>
    <property type="evidence" value="ECO:0000318"/>
    <property type="project" value="GO_Central"/>
</dbReference>
<dbReference type="GO" id="GO:0007155">
    <property type="term" value="P:cell adhesion"/>
    <property type="evidence" value="ECO:0000318"/>
    <property type="project" value="GO_Central"/>
</dbReference>
<dbReference type="GO" id="GO:0071391">
    <property type="term" value="P:cellular response to estrogen stimulus"/>
    <property type="evidence" value="ECO:0000266"/>
    <property type="project" value="RGD"/>
</dbReference>
<dbReference type="GO" id="GO:0048565">
    <property type="term" value="P:digestive tract development"/>
    <property type="evidence" value="ECO:0000266"/>
    <property type="project" value="RGD"/>
</dbReference>
<dbReference type="GO" id="GO:0050673">
    <property type="term" value="P:epithelial cell proliferation"/>
    <property type="evidence" value="ECO:0000266"/>
    <property type="project" value="RGD"/>
</dbReference>
<dbReference type="GO" id="GO:0042045">
    <property type="term" value="P:epithelial fluid transport"/>
    <property type="evidence" value="ECO:0000266"/>
    <property type="project" value="RGD"/>
</dbReference>
<dbReference type="GO" id="GO:0048286">
    <property type="term" value="P:lung alveolus development"/>
    <property type="evidence" value="ECO:0000266"/>
    <property type="project" value="RGD"/>
</dbReference>
<dbReference type="GO" id="GO:0045779">
    <property type="term" value="P:negative regulation of bone resorption"/>
    <property type="evidence" value="ECO:0000266"/>
    <property type="project" value="RGD"/>
</dbReference>
<dbReference type="GO" id="GO:2001205">
    <property type="term" value="P:negative regulation of osteoclast development"/>
    <property type="evidence" value="ECO:0000266"/>
    <property type="project" value="RGD"/>
</dbReference>
<dbReference type="GO" id="GO:1900181">
    <property type="term" value="P:negative regulation of protein localization to nucleus"/>
    <property type="evidence" value="ECO:0000266"/>
    <property type="project" value="RGD"/>
</dbReference>
<dbReference type="GO" id="GO:0010804">
    <property type="term" value="P:negative regulation of tumor necrosis factor-mediated signaling pathway"/>
    <property type="evidence" value="ECO:0000266"/>
    <property type="project" value="RGD"/>
</dbReference>
<dbReference type="GO" id="GO:0035265">
    <property type="term" value="P:organ growth"/>
    <property type="evidence" value="ECO:0000266"/>
    <property type="project" value="RGD"/>
</dbReference>
<dbReference type="GO" id="GO:0034504">
    <property type="term" value="P:protein localization to nucleus"/>
    <property type="evidence" value="ECO:0000266"/>
    <property type="project" value="RGD"/>
</dbReference>
<dbReference type="GO" id="GO:0045471">
    <property type="term" value="P:response to ethanol"/>
    <property type="evidence" value="ECO:0000270"/>
    <property type="project" value="RGD"/>
</dbReference>
<dbReference type="GO" id="GO:0120193">
    <property type="term" value="P:tight junction organization"/>
    <property type="evidence" value="ECO:0000266"/>
    <property type="project" value="RGD"/>
</dbReference>
<dbReference type="FunFam" id="1.20.140.150:FF:000027">
    <property type="entry name" value="Claudin"/>
    <property type="match status" value="1"/>
</dbReference>
<dbReference type="Gene3D" id="1.20.140.150">
    <property type="match status" value="1"/>
</dbReference>
<dbReference type="InterPro" id="IPR006187">
    <property type="entry name" value="Claudin"/>
</dbReference>
<dbReference type="InterPro" id="IPR003928">
    <property type="entry name" value="Claudin18"/>
</dbReference>
<dbReference type="InterPro" id="IPR017974">
    <property type="entry name" value="Claudin_CS"/>
</dbReference>
<dbReference type="InterPro" id="IPR004031">
    <property type="entry name" value="PMP22/EMP/MP20/Claudin"/>
</dbReference>
<dbReference type="PANTHER" id="PTHR12002">
    <property type="entry name" value="CLAUDIN"/>
    <property type="match status" value="1"/>
</dbReference>
<dbReference type="Pfam" id="PF00822">
    <property type="entry name" value="PMP22_Claudin"/>
    <property type="match status" value="1"/>
</dbReference>
<dbReference type="PRINTS" id="PR01077">
    <property type="entry name" value="CLAUDIN"/>
</dbReference>
<dbReference type="PRINTS" id="PR01448">
    <property type="entry name" value="CLAUDIN18"/>
</dbReference>
<dbReference type="PROSITE" id="PS01346">
    <property type="entry name" value="CLAUDIN"/>
    <property type="match status" value="1"/>
</dbReference>
<proteinExistence type="evidence at protein level"/>
<organism evidence="10">
    <name type="scientific">Rattus norvegicus</name>
    <name type="common">Rat</name>
    <dbReference type="NCBI Taxonomy" id="10116"/>
    <lineage>
        <taxon>Eukaryota</taxon>
        <taxon>Metazoa</taxon>
        <taxon>Chordata</taxon>
        <taxon>Craniata</taxon>
        <taxon>Vertebrata</taxon>
        <taxon>Euteleostomi</taxon>
        <taxon>Mammalia</taxon>
        <taxon>Eutheria</taxon>
        <taxon>Euarchontoglires</taxon>
        <taxon>Glires</taxon>
        <taxon>Rodentia</taxon>
        <taxon>Myomorpha</taxon>
        <taxon>Muroidea</taxon>
        <taxon>Muridae</taxon>
        <taxon>Murinae</taxon>
        <taxon>Rattus</taxon>
    </lineage>
</organism>
<sequence>MATTTCQVVGLLLSLLGLAGCIAATGMDMWSTQDLYDNPVTSVFQYEGLWRSCVQQSSGFTECRPYFTILGLPAMLQAVRALMIVGIVLGVIGILVSIFALKCIRIGSMDDSAKAKMTLTSGIMFIISGVCAIIGVSVFANMLVTNFWMSTANMYSGMGGMVQTVQTRYTFGAALFVGWIAGGLTLIGGVMMCIACRGLTPDDRNFKAVSYHASGQNVAYKPGGFKASTGFGSNARNKKIYDGGARTEDDEQSHPTKYDYV</sequence>
<gene>
    <name evidence="11" type="primary">Cldn18</name>
</gene>
<comment type="function">
    <text evidence="2 6">Involved in alveolar fluid homeostasis via regulation of alveolar epithelial tight junction composition and therefore ion transport and solute permeability, potentially via downstream regulation of the actin cytoskeleton organization and beta-2-adrenergic signaling (By similarity). Required for lung alveolarization and maintenance of the paracellular alveolar epithelial barrier (PubMed:24787463). Acts to maintain epithelial progenitor cell proliferation and organ size, via regulation of YAP1 localization away from the nucleus and thereby restriction of YAP1 target gene transcription (By similarity). Acts as a negative regulator of RANKL-induced osteoclast differentiation, potentially via relocation of TJP2/ZO-2 away from the nucleus, subsequently involved in bone resorption in response to calcium deficiency (By similarity). Mediates the osteoprotective effects of estrogen, potentially via acting downstream of estrogen signaling independently of RANKL signaling pathways (By similarity).</text>
</comment>
<comment type="function">
    <molecule>Isoform A2.1</molecule>
    <text evidence="2">Required for the formation of the gastric paracellular barrier via its role in tight junction formation, thereby involved in the response to gastric acidification.</text>
</comment>
<comment type="subunit">
    <text evidence="1 2">Interacts with TJP2/ZO-2 (By similarity). Interacts with TJP1/ZO-1 (By similarity). Interacts with YAP1 (phosphorylated); the interaction sequesters YAP1 away from the nucleus and thereby restricts transcription of YAP1 target genes (By similarity). Interacts with CLDN19.</text>
</comment>
<comment type="subcellular location">
    <subcellularLocation>
        <location evidence="2">Cell junction</location>
        <location evidence="2">Tight junction</location>
    </subcellularLocation>
    <subcellularLocation>
        <location evidence="2">Cell membrane</location>
        <topology evidence="4">Multi-pass membrane protein</topology>
    </subcellularLocation>
</comment>
<comment type="subcellular location">
    <molecule>Isoform A1.1</molecule>
    <subcellularLocation>
        <location evidence="2">Cell junction</location>
        <location evidence="2">Tight junction</location>
    </subcellularLocation>
</comment>
<comment type="alternative products">
    <event type="alternative splicing"/>
    <isoform>
        <id>Q5I0E5-1</id>
        <name>A1.1</name>
        <sequence type="displayed"/>
    </isoform>
    <isoform>
        <id>Q5I0E5-2</id>
        <name>A2.1</name>
        <sequence type="described" ref="VSP_061799"/>
    </isoform>
</comment>
<comment type="tissue specificity">
    <text evidence="6">Expressed in the lung (at protein level).</text>
</comment>
<comment type="similarity">
    <text evidence="4">Belongs to the claudin family.</text>
</comment>